<sequence length="404" mass="44465">MSKVQVKKVVVAYSGGLDTSVIIPWLKENYDCEVVAFVADVGQGDEELKGVEAKALSSGASECYIVDLKEEFVKEYIYPTLKTGAYYEGKYLLGTSMARPVIAKAQVEIARKVGADALAHGCTGKGNDQVRFEGAFAALAPDLHVIAPWREWDLRSREACLDYLAERNIPCAASLTKIYSRDANAWHVSTEGGVLESTWNAPNEDCWVWTVDPEQAPNEAEYVTLQVAHGEVVAVDGEAMTPYNALLYLNQKGAKHGVGRIDIVENRLVGMKSRGCYETPGGTIIMEALRAVEQLVLDKTSFEFREELGIKASHLVYDGRWFTPLRQAVFAAADELAKDVNGEVVIKLYKGQAVATQKRSANSLYSEDFATFGADEVYDHSHAGGFIRLYSLSSRIRALSQNKQ</sequence>
<protein>
    <recommendedName>
        <fullName evidence="1">Argininosuccinate synthase</fullName>
        <ecNumber evidence="1">6.3.4.5</ecNumber>
    </recommendedName>
    <alternativeName>
        <fullName evidence="1">Citrulline--aspartate ligase</fullName>
    </alternativeName>
</protein>
<dbReference type="EC" id="6.3.4.5" evidence="1"/>
<dbReference type="EMBL" id="CP001233">
    <property type="protein sequence ID" value="ACP06858.1"/>
    <property type="molecule type" value="Genomic_DNA"/>
</dbReference>
<dbReference type="RefSeq" id="WP_000049171.1">
    <property type="nucleotide sequence ID" value="NC_012578.1"/>
</dbReference>
<dbReference type="SMR" id="C3LRV3"/>
<dbReference type="KEGG" id="vcm:VCM66_2562"/>
<dbReference type="HOGENOM" id="CLU_032784_4_2_6"/>
<dbReference type="UniPathway" id="UPA00068">
    <property type="reaction ID" value="UER00113"/>
</dbReference>
<dbReference type="Proteomes" id="UP000001217">
    <property type="component" value="Chromosome I"/>
</dbReference>
<dbReference type="GO" id="GO:0005737">
    <property type="term" value="C:cytoplasm"/>
    <property type="evidence" value="ECO:0007669"/>
    <property type="project" value="UniProtKB-SubCell"/>
</dbReference>
<dbReference type="GO" id="GO:0004055">
    <property type="term" value="F:argininosuccinate synthase activity"/>
    <property type="evidence" value="ECO:0007669"/>
    <property type="project" value="UniProtKB-UniRule"/>
</dbReference>
<dbReference type="GO" id="GO:0005524">
    <property type="term" value="F:ATP binding"/>
    <property type="evidence" value="ECO:0007669"/>
    <property type="project" value="UniProtKB-UniRule"/>
</dbReference>
<dbReference type="GO" id="GO:0000053">
    <property type="term" value="P:argininosuccinate metabolic process"/>
    <property type="evidence" value="ECO:0007669"/>
    <property type="project" value="TreeGrafter"/>
</dbReference>
<dbReference type="GO" id="GO:0006526">
    <property type="term" value="P:L-arginine biosynthetic process"/>
    <property type="evidence" value="ECO:0007669"/>
    <property type="project" value="UniProtKB-UniRule"/>
</dbReference>
<dbReference type="GO" id="GO:0000050">
    <property type="term" value="P:urea cycle"/>
    <property type="evidence" value="ECO:0007669"/>
    <property type="project" value="TreeGrafter"/>
</dbReference>
<dbReference type="CDD" id="cd01999">
    <property type="entry name" value="ASS"/>
    <property type="match status" value="1"/>
</dbReference>
<dbReference type="FunFam" id="3.40.50.620:FF:000019">
    <property type="entry name" value="Argininosuccinate synthase"/>
    <property type="match status" value="1"/>
</dbReference>
<dbReference type="FunFam" id="3.90.1260.10:FF:000007">
    <property type="entry name" value="Argininosuccinate synthase"/>
    <property type="match status" value="1"/>
</dbReference>
<dbReference type="Gene3D" id="3.90.1260.10">
    <property type="entry name" value="Argininosuccinate synthetase, chain A, domain 2"/>
    <property type="match status" value="1"/>
</dbReference>
<dbReference type="Gene3D" id="3.40.50.620">
    <property type="entry name" value="HUPs"/>
    <property type="match status" value="1"/>
</dbReference>
<dbReference type="Gene3D" id="1.20.5.470">
    <property type="entry name" value="Single helix bin"/>
    <property type="match status" value="1"/>
</dbReference>
<dbReference type="HAMAP" id="MF_00005">
    <property type="entry name" value="Arg_succ_synth_type1"/>
    <property type="match status" value="1"/>
</dbReference>
<dbReference type="InterPro" id="IPR048268">
    <property type="entry name" value="Arginosuc_syn_C"/>
</dbReference>
<dbReference type="InterPro" id="IPR048267">
    <property type="entry name" value="Arginosuc_syn_N"/>
</dbReference>
<dbReference type="InterPro" id="IPR001518">
    <property type="entry name" value="Arginosuc_synth"/>
</dbReference>
<dbReference type="InterPro" id="IPR018223">
    <property type="entry name" value="Arginosuc_synth_CS"/>
</dbReference>
<dbReference type="InterPro" id="IPR023434">
    <property type="entry name" value="Arginosuc_synth_type_1_subfam"/>
</dbReference>
<dbReference type="InterPro" id="IPR024074">
    <property type="entry name" value="AS_cat/multimer_dom_body"/>
</dbReference>
<dbReference type="InterPro" id="IPR014729">
    <property type="entry name" value="Rossmann-like_a/b/a_fold"/>
</dbReference>
<dbReference type="NCBIfam" id="TIGR00032">
    <property type="entry name" value="argG"/>
    <property type="match status" value="1"/>
</dbReference>
<dbReference type="NCBIfam" id="NF001770">
    <property type="entry name" value="PRK00509.1"/>
    <property type="match status" value="1"/>
</dbReference>
<dbReference type="PANTHER" id="PTHR11587">
    <property type="entry name" value="ARGININOSUCCINATE SYNTHASE"/>
    <property type="match status" value="1"/>
</dbReference>
<dbReference type="PANTHER" id="PTHR11587:SF2">
    <property type="entry name" value="ARGININOSUCCINATE SYNTHASE"/>
    <property type="match status" value="1"/>
</dbReference>
<dbReference type="Pfam" id="PF20979">
    <property type="entry name" value="Arginosuc_syn_C"/>
    <property type="match status" value="1"/>
</dbReference>
<dbReference type="Pfam" id="PF00764">
    <property type="entry name" value="Arginosuc_synth"/>
    <property type="match status" value="1"/>
</dbReference>
<dbReference type="SUPFAM" id="SSF52402">
    <property type="entry name" value="Adenine nucleotide alpha hydrolases-like"/>
    <property type="match status" value="1"/>
</dbReference>
<dbReference type="SUPFAM" id="SSF69864">
    <property type="entry name" value="Argininosuccinate synthetase, C-terminal domain"/>
    <property type="match status" value="1"/>
</dbReference>
<dbReference type="PROSITE" id="PS00564">
    <property type="entry name" value="ARGININOSUCCIN_SYN_1"/>
    <property type="match status" value="1"/>
</dbReference>
<dbReference type="PROSITE" id="PS00565">
    <property type="entry name" value="ARGININOSUCCIN_SYN_2"/>
    <property type="match status" value="1"/>
</dbReference>
<proteinExistence type="inferred from homology"/>
<evidence type="ECO:0000255" key="1">
    <source>
        <dbReference type="HAMAP-Rule" id="MF_00005"/>
    </source>
</evidence>
<accession>C3LRV3</accession>
<comment type="catalytic activity">
    <reaction evidence="1">
        <text>L-citrulline + L-aspartate + ATP = 2-(N(omega)-L-arginino)succinate + AMP + diphosphate + H(+)</text>
        <dbReference type="Rhea" id="RHEA:10932"/>
        <dbReference type="ChEBI" id="CHEBI:15378"/>
        <dbReference type="ChEBI" id="CHEBI:29991"/>
        <dbReference type="ChEBI" id="CHEBI:30616"/>
        <dbReference type="ChEBI" id="CHEBI:33019"/>
        <dbReference type="ChEBI" id="CHEBI:57472"/>
        <dbReference type="ChEBI" id="CHEBI:57743"/>
        <dbReference type="ChEBI" id="CHEBI:456215"/>
        <dbReference type="EC" id="6.3.4.5"/>
    </reaction>
</comment>
<comment type="pathway">
    <text evidence="1">Amino-acid biosynthesis; L-arginine biosynthesis; L-arginine from L-ornithine and carbamoyl phosphate: step 2/3.</text>
</comment>
<comment type="subunit">
    <text evidence="1">Homotetramer.</text>
</comment>
<comment type="subcellular location">
    <subcellularLocation>
        <location evidence="1">Cytoplasm</location>
    </subcellularLocation>
</comment>
<comment type="similarity">
    <text evidence="1">Belongs to the argininosuccinate synthase family. Type 1 subfamily.</text>
</comment>
<organism>
    <name type="scientific">Vibrio cholerae serotype O1 (strain M66-2)</name>
    <dbReference type="NCBI Taxonomy" id="579112"/>
    <lineage>
        <taxon>Bacteria</taxon>
        <taxon>Pseudomonadati</taxon>
        <taxon>Pseudomonadota</taxon>
        <taxon>Gammaproteobacteria</taxon>
        <taxon>Vibrionales</taxon>
        <taxon>Vibrionaceae</taxon>
        <taxon>Vibrio</taxon>
    </lineage>
</organism>
<feature type="chain" id="PRO_1000116295" description="Argininosuccinate synthase">
    <location>
        <begin position="1"/>
        <end position="404"/>
    </location>
</feature>
<feature type="binding site" evidence="1">
    <location>
        <begin position="12"/>
        <end position="20"/>
    </location>
    <ligand>
        <name>ATP</name>
        <dbReference type="ChEBI" id="CHEBI:30616"/>
    </ligand>
</feature>
<feature type="binding site" evidence="1">
    <location>
        <position position="39"/>
    </location>
    <ligand>
        <name>ATP</name>
        <dbReference type="ChEBI" id="CHEBI:30616"/>
    </ligand>
</feature>
<feature type="binding site" evidence="1">
    <location>
        <position position="91"/>
    </location>
    <ligand>
        <name>L-citrulline</name>
        <dbReference type="ChEBI" id="CHEBI:57743"/>
    </ligand>
</feature>
<feature type="binding site" evidence="1">
    <location>
        <position position="96"/>
    </location>
    <ligand>
        <name>L-citrulline</name>
        <dbReference type="ChEBI" id="CHEBI:57743"/>
    </ligand>
</feature>
<feature type="binding site" evidence="1">
    <location>
        <position position="121"/>
    </location>
    <ligand>
        <name>ATP</name>
        <dbReference type="ChEBI" id="CHEBI:30616"/>
    </ligand>
</feature>
<feature type="binding site" evidence="1">
    <location>
        <position position="123"/>
    </location>
    <ligand>
        <name>L-aspartate</name>
        <dbReference type="ChEBI" id="CHEBI:29991"/>
    </ligand>
</feature>
<feature type="binding site" evidence="1">
    <location>
        <position position="127"/>
    </location>
    <ligand>
        <name>L-aspartate</name>
        <dbReference type="ChEBI" id="CHEBI:29991"/>
    </ligand>
</feature>
<feature type="binding site" evidence="1">
    <location>
        <position position="127"/>
    </location>
    <ligand>
        <name>L-citrulline</name>
        <dbReference type="ChEBI" id="CHEBI:57743"/>
    </ligand>
</feature>
<feature type="binding site" evidence="1">
    <location>
        <position position="128"/>
    </location>
    <ligand>
        <name>L-aspartate</name>
        <dbReference type="ChEBI" id="CHEBI:29991"/>
    </ligand>
</feature>
<feature type="binding site" evidence="1">
    <location>
        <position position="131"/>
    </location>
    <ligand>
        <name>L-citrulline</name>
        <dbReference type="ChEBI" id="CHEBI:57743"/>
    </ligand>
</feature>
<feature type="binding site" evidence="1">
    <location>
        <position position="180"/>
    </location>
    <ligand>
        <name>L-citrulline</name>
        <dbReference type="ChEBI" id="CHEBI:57743"/>
    </ligand>
</feature>
<feature type="binding site" evidence="1">
    <location>
        <position position="189"/>
    </location>
    <ligand>
        <name>L-citrulline</name>
        <dbReference type="ChEBI" id="CHEBI:57743"/>
    </ligand>
</feature>
<feature type="binding site" evidence="1">
    <location>
        <position position="265"/>
    </location>
    <ligand>
        <name>L-citrulline</name>
        <dbReference type="ChEBI" id="CHEBI:57743"/>
    </ligand>
</feature>
<feature type="binding site" evidence="1">
    <location>
        <position position="277"/>
    </location>
    <ligand>
        <name>L-citrulline</name>
        <dbReference type="ChEBI" id="CHEBI:57743"/>
    </ligand>
</feature>
<gene>
    <name evidence="1" type="primary">argG</name>
    <name type="ordered locus">VCM66_2562</name>
</gene>
<reference key="1">
    <citation type="journal article" date="2008" name="PLoS ONE">
        <title>A recalibrated molecular clock and independent origins for the cholera pandemic clones.</title>
        <authorList>
            <person name="Feng L."/>
            <person name="Reeves P.R."/>
            <person name="Lan R."/>
            <person name="Ren Y."/>
            <person name="Gao C."/>
            <person name="Zhou Z."/>
            <person name="Ren Y."/>
            <person name="Cheng J."/>
            <person name="Wang W."/>
            <person name="Wang J."/>
            <person name="Qian W."/>
            <person name="Li D."/>
            <person name="Wang L."/>
        </authorList>
    </citation>
    <scope>NUCLEOTIDE SEQUENCE [LARGE SCALE GENOMIC DNA]</scope>
    <source>
        <strain>M66-2</strain>
    </source>
</reference>
<keyword id="KW-0028">Amino-acid biosynthesis</keyword>
<keyword id="KW-0055">Arginine biosynthesis</keyword>
<keyword id="KW-0067">ATP-binding</keyword>
<keyword id="KW-0963">Cytoplasm</keyword>
<keyword id="KW-0436">Ligase</keyword>
<keyword id="KW-0547">Nucleotide-binding</keyword>
<name>ASSY_VIBCM</name>